<comment type="function">
    <text evidence="1">Transfers the gamma-phosphate of ATP to the 4'-position of a tetraacyldisaccharide 1-phosphate intermediate (termed DS-1-P) to form tetraacyldisaccharide 1,4'-bis-phosphate (lipid IVA).</text>
</comment>
<comment type="catalytic activity">
    <reaction evidence="1">
        <text>a lipid A disaccharide + ATP = a lipid IVA + ADP + H(+)</text>
        <dbReference type="Rhea" id="RHEA:67840"/>
        <dbReference type="ChEBI" id="CHEBI:15378"/>
        <dbReference type="ChEBI" id="CHEBI:30616"/>
        <dbReference type="ChEBI" id="CHEBI:176343"/>
        <dbReference type="ChEBI" id="CHEBI:176425"/>
        <dbReference type="ChEBI" id="CHEBI:456216"/>
        <dbReference type="EC" id="2.7.1.130"/>
    </reaction>
</comment>
<comment type="pathway">
    <text evidence="1">Glycolipid biosynthesis; lipid IV(A) biosynthesis; lipid IV(A) from (3R)-3-hydroxytetradecanoyl-[acyl-carrier-protein] and UDP-N-acetyl-alpha-D-glucosamine: step 6/6.</text>
</comment>
<comment type="similarity">
    <text evidence="1">Belongs to the LpxK family.</text>
</comment>
<keyword id="KW-0067">ATP-binding</keyword>
<keyword id="KW-0418">Kinase</keyword>
<keyword id="KW-0441">Lipid A biosynthesis</keyword>
<keyword id="KW-0444">Lipid biosynthesis</keyword>
<keyword id="KW-0443">Lipid metabolism</keyword>
<keyword id="KW-0547">Nucleotide-binding</keyword>
<keyword id="KW-0808">Transferase</keyword>
<sequence>MREPAFWHRPPSLLSRLLLPFGAVYGEVTAARMQKVGIETGVPVLCVGNYHLGGAGKTPTTLALVQLLRDLGEHPVVLSRGYGGRLRGPILVDAKRHSAADVGDEPLMMARTAPVVVARERTDGAALARSQGASVIVMDDGFQNPALVKDASLIVIDSRRGVGNGCVFPAGPLRAPLPLQVARTDVMIIVGDGQAADAVAAQIAARGGPVLRARLAPDETSLERLKGRRVLAFAGIGDPARFFATLRASGVEIAEQRAFPDHHPFTADELASLADSARRGGLTLVTTEKDLARIGPDAASLGSDLVALAVTLVVEEEARLRRFLLERINQARTKQFAR</sequence>
<accession>Q131B2</accession>
<dbReference type="EC" id="2.7.1.130" evidence="1"/>
<dbReference type="EMBL" id="CP000283">
    <property type="protein sequence ID" value="ABE41327.1"/>
    <property type="molecule type" value="Genomic_DNA"/>
</dbReference>
<dbReference type="SMR" id="Q131B2"/>
<dbReference type="STRING" id="316057.RPD_4108"/>
<dbReference type="KEGG" id="rpd:RPD_4108"/>
<dbReference type="eggNOG" id="COG1663">
    <property type="taxonomic scope" value="Bacteria"/>
</dbReference>
<dbReference type="HOGENOM" id="CLU_038816_0_0_5"/>
<dbReference type="BioCyc" id="RPAL316057:RPD_RS20670-MONOMER"/>
<dbReference type="UniPathway" id="UPA00359">
    <property type="reaction ID" value="UER00482"/>
</dbReference>
<dbReference type="Proteomes" id="UP000001818">
    <property type="component" value="Chromosome"/>
</dbReference>
<dbReference type="GO" id="GO:0005886">
    <property type="term" value="C:plasma membrane"/>
    <property type="evidence" value="ECO:0007669"/>
    <property type="project" value="TreeGrafter"/>
</dbReference>
<dbReference type="GO" id="GO:0005524">
    <property type="term" value="F:ATP binding"/>
    <property type="evidence" value="ECO:0007669"/>
    <property type="project" value="UniProtKB-UniRule"/>
</dbReference>
<dbReference type="GO" id="GO:0009029">
    <property type="term" value="F:tetraacyldisaccharide 4'-kinase activity"/>
    <property type="evidence" value="ECO:0007669"/>
    <property type="project" value="UniProtKB-UniRule"/>
</dbReference>
<dbReference type="GO" id="GO:0009245">
    <property type="term" value="P:lipid A biosynthetic process"/>
    <property type="evidence" value="ECO:0007669"/>
    <property type="project" value="UniProtKB-UniRule"/>
</dbReference>
<dbReference type="GO" id="GO:0009244">
    <property type="term" value="P:lipopolysaccharide core region biosynthetic process"/>
    <property type="evidence" value="ECO:0007669"/>
    <property type="project" value="TreeGrafter"/>
</dbReference>
<dbReference type="HAMAP" id="MF_00409">
    <property type="entry name" value="LpxK"/>
    <property type="match status" value="1"/>
</dbReference>
<dbReference type="InterPro" id="IPR003758">
    <property type="entry name" value="LpxK"/>
</dbReference>
<dbReference type="InterPro" id="IPR027417">
    <property type="entry name" value="P-loop_NTPase"/>
</dbReference>
<dbReference type="NCBIfam" id="TIGR00682">
    <property type="entry name" value="lpxK"/>
    <property type="match status" value="1"/>
</dbReference>
<dbReference type="PANTHER" id="PTHR42724">
    <property type="entry name" value="TETRAACYLDISACCHARIDE 4'-KINASE"/>
    <property type="match status" value="1"/>
</dbReference>
<dbReference type="PANTHER" id="PTHR42724:SF1">
    <property type="entry name" value="TETRAACYLDISACCHARIDE 4'-KINASE, MITOCHONDRIAL-RELATED"/>
    <property type="match status" value="1"/>
</dbReference>
<dbReference type="Pfam" id="PF02606">
    <property type="entry name" value="LpxK"/>
    <property type="match status" value="1"/>
</dbReference>
<dbReference type="SUPFAM" id="SSF52540">
    <property type="entry name" value="P-loop containing nucleoside triphosphate hydrolases"/>
    <property type="match status" value="1"/>
</dbReference>
<organism>
    <name type="scientific">Rhodopseudomonas palustris (strain BisB5)</name>
    <dbReference type="NCBI Taxonomy" id="316057"/>
    <lineage>
        <taxon>Bacteria</taxon>
        <taxon>Pseudomonadati</taxon>
        <taxon>Pseudomonadota</taxon>
        <taxon>Alphaproteobacteria</taxon>
        <taxon>Hyphomicrobiales</taxon>
        <taxon>Nitrobacteraceae</taxon>
        <taxon>Rhodopseudomonas</taxon>
    </lineage>
</organism>
<gene>
    <name evidence="1" type="primary">lpxK</name>
    <name type="ordered locus">RPD_4108</name>
</gene>
<reference key="1">
    <citation type="submission" date="2006-03" db="EMBL/GenBank/DDBJ databases">
        <title>Complete sequence of Rhodopseudomonas palustris BisB5.</title>
        <authorList>
            <consortium name="US DOE Joint Genome Institute"/>
            <person name="Copeland A."/>
            <person name="Lucas S."/>
            <person name="Lapidus A."/>
            <person name="Barry K."/>
            <person name="Detter J.C."/>
            <person name="Glavina del Rio T."/>
            <person name="Hammon N."/>
            <person name="Israni S."/>
            <person name="Dalin E."/>
            <person name="Tice H."/>
            <person name="Pitluck S."/>
            <person name="Chain P."/>
            <person name="Malfatti S."/>
            <person name="Shin M."/>
            <person name="Vergez L."/>
            <person name="Schmutz J."/>
            <person name="Larimer F."/>
            <person name="Land M."/>
            <person name="Hauser L."/>
            <person name="Pelletier D.A."/>
            <person name="Kyrpides N."/>
            <person name="Lykidis A."/>
            <person name="Oda Y."/>
            <person name="Harwood C.S."/>
            <person name="Richardson P."/>
        </authorList>
    </citation>
    <scope>NUCLEOTIDE SEQUENCE [LARGE SCALE GENOMIC DNA]</scope>
    <source>
        <strain>BisB5</strain>
    </source>
</reference>
<feature type="chain" id="PRO_0000291236" description="Tetraacyldisaccharide 4'-kinase">
    <location>
        <begin position="1"/>
        <end position="338"/>
    </location>
</feature>
<feature type="binding site" evidence="1">
    <location>
        <begin position="51"/>
        <end position="58"/>
    </location>
    <ligand>
        <name>ATP</name>
        <dbReference type="ChEBI" id="CHEBI:30616"/>
    </ligand>
</feature>
<name>LPXK_RHOPS</name>
<evidence type="ECO:0000255" key="1">
    <source>
        <dbReference type="HAMAP-Rule" id="MF_00409"/>
    </source>
</evidence>
<protein>
    <recommendedName>
        <fullName evidence="1">Tetraacyldisaccharide 4'-kinase</fullName>
        <ecNumber evidence="1">2.7.1.130</ecNumber>
    </recommendedName>
    <alternativeName>
        <fullName evidence="1">Lipid A 4'-kinase</fullName>
    </alternativeName>
</protein>
<proteinExistence type="inferred from homology"/>